<reference key="1">
    <citation type="journal article" date="2000" name="J. Biol. Chem.">
        <title>A novel member of the BTB/POZ family, PATZ, associates with the RNF4 RING finger protein and acts as a transcriptional repressor.</title>
        <authorList>
            <person name="Fedele M."/>
            <person name="Benvenuto G."/>
            <person name="Pero R."/>
            <person name="Majello B."/>
            <person name="Battista S."/>
            <person name="Lembo F."/>
            <person name="Vollono E."/>
            <person name="Day P.M."/>
            <person name="Santoro M."/>
            <person name="Lania L."/>
            <person name="Bruni C.B."/>
            <person name="Fusco A."/>
            <person name="Chiatiotti L."/>
        </authorList>
    </citation>
    <scope>NUCLEOTIDE SEQUENCE [MRNA] (ISOFORM 4)</scope>
    <scope>SUBCELLULAR LOCATION</scope>
    <scope>FUNCTION</scope>
    <scope>INTERACTION WITH RNF4</scope>
</reference>
<reference key="2">
    <citation type="journal article" date="2000" name="Oncogene">
        <title>A novel zinc finger gene is fused to EWS in small round cell tumor.</title>
        <authorList>
            <person name="Mastrangelo T."/>
            <person name="Modena P."/>
            <person name="Tornielli S."/>
            <person name="Bullrich F."/>
            <person name="Testi A."/>
            <person name="Mezzelani A."/>
            <person name="Radice P."/>
            <person name="Azzarelli A."/>
            <person name="Pilotti S."/>
            <person name="Croce C."/>
            <person name="Pierotti M."/>
            <person name="Sozzi G."/>
        </authorList>
    </citation>
    <scope>NUCLEOTIDE SEQUENCE [MRNA] (ISOFORMS 1; 2; 3 AND 4)</scope>
    <scope>CHROMOSOMAL TRANSLOCATION WITH EWSR1</scope>
</reference>
<reference key="3">
    <citation type="submission" date="2001-03" db="EMBL/GenBank/DDBJ databases">
        <title>Novel cAMP signalling via the regulatory subunit of the cAMP-dependent protein kinase.</title>
        <authorList>
            <person name="Chin K.-V."/>
            <person name="Yang W.-L."/>
            <person name="Kudoh K."/>
        </authorList>
    </citation>
    <scope>NUCLEOTIDE SEQUENCE (ISOFORM 3)</scope>
</reference>
<reference key="4">
    <citation type="submission" date="1999-07" db="EMBL/GenBank/DDBJ databases">
        <authorList>
            <person name="Collins J.E."/>
            <person name="Huckle E.J."/>
        </authorList>
    </citation>
    <scope>NUCLEOTIDE SEQUENCE [MRNA] (ISOFORM 3)</scope>
</reference>
<reference key="5">
    <citation type="journal article" date="2004" name="Genome Biol.">
        <title>A genome annotation-driven approach to cloning the human ORFeome.</title>
        <authorList>
            <person name="Collins J.E."/>
            <person name="Wright C.L."/>
            <person name="Edwards C.A."/>
            <person name="Davis M.P."/>
            <person name="Grinham J.A."/>
            <person name="Cole C.G."/>
            <person name="Goward M.E."/>
            <person name="Aguado B."/>
            <person name="Mallya M."/>
            <person name="Mokrab Y."/>
            <person name="Huckle E.J."/>
            <person name="Beare D.M."/>
            <person name="Dunham I."/>
        </authorList>
    </citation>
    <scope>NUCLEOTIDE SEQUENCE [LARGE SCALE MRNA] (ISOFORM 3)</scope>
</reference>
<reference key="6">
    <citation type="journal article" date="1999" name="Nature">
        <title>The DNA sequence of human chromosome 22.</title>
        <authorList>
            <person name="Dunham I."/>
            <person name="Hunt A.R."/>
            <person name="Collins J.E."/>
            <person name="Bruskiewich R."/>
            <person name="Beare D.M."/>
            <person name="Clamp M."/>
            <person name="Smink L.J."/>
            <person name="Ainscough R."/>
            <person name="Almeida J.P."/>
            <person name="Babbage A.K."/>
            <person name="Bagguley C."/>
            <person name="Bailey J."/>
            <person name="Barlow K.F."/>
            <person name="Bates K.N."/>
            <person name="Beasley O.P."/>
            <person name="Bird C.P."/>
            <person name="Blakey S.E."/>
            <person name="Bridgeman A.M."/>
            <person name="Buck D."/>
            <person name="Burgess J."/>
            <person name="Burrill W.D."/>
            <person name="Burton J."/>
            <person name="Carder C."/>
            <person name="Carter N.P."/>
            <person name="Chen Y."/>
            <person name="Clark G."/>
            <person name="Clegg S.M."/>
            <person name="Cobley V.E."/>
            <person name="Cole C.G."/>
            <person name="Collier R.E."/>
            <person name="Connor R."/>
            <person name="Conroy D."/>
            <person name="Corby N.R."/>
            <person name="Coville G.J."/>
            <person name="Cox A.V."/>
            <person name="Davis J."/>
            <person name="Dawson E."/>
            <person name="Dhami P.D."/>
            <person name="Dockree C."/>
            <person name="Dodsworth S.J."/>
            <person name="Durbin R.M."/>
            <person name="Ellington A.G."/>
            <person name="Evans K.L."/>
            <person name="Fey J.M."/>
            <person name="Fleming K."/>
            <person name="French L."/>
            <person name="Garner A.A."/>
            <person name="Gilbert J.G.R."/>
            <person name="Goward M.E."/>
            <person name="Grafham D.V."/>
            <person name="Griffiths M.N.D."/>
            <person name="Hall C."/>
            <person name="Hall R.E."/>
            <person name="Hall-Tamlyn G."/>
            <person name="Heathcott R.W."/>
            <person name="Ho S."/>
            <person name="Holmes S."/>
            <person name="Hunt S.E."/>
            <person name="Jones M.C."/>
            <person name="Kershaw J."/>
            <person name="Kimberley A.M."/>
            <person name="King A."/>
            <person name="Laird G.K."/>
            <person name="Langford C.F."/>
            <person name="Leversha M.A."/>
            <person name="Lloyd C."/>
            <person name="Lloyd D.M."/>
            <person name="Martyn I.D."/>
            <person name="Mashreghi-Mohammadi M."/>
            <person name="Matthews L.H."/>
            <person name="Mccann O.T."/>
            <person name="Mcclay J."/>
            <person name="Mclaren S."/>
            <person name="McMurray A.A."/>
            <person name="Milne S.A."/>
            <person name="Mortimore B.J."/>
            <person name="Odell C.N."/>
            <person name="Pavitt R."/>
            <person name="Pearce A.V."/>
            <person name="Pearson D."/>
            <person name="Phillimore B.J.C.T."/>
            <person name="Phillips S.H."/>
            <person name="Plumb R.W."/>
            <person name="Ramsay H."/>
            <person name="Ramsey Y."/>
            <person name="Rogers L."/>
            <person name="Ross M.T."/>
            <person name="Scott C.E."/>
            <person name="Sehra H.K."/>
            <person name="Skuce C.D."/>
            <person name="Smalley S."/>
            <person name="Smith M.L."/>
            <person name="Soderlund C."/>
            <person name="Spragon L."/>
            <person name="Steward C.A."/>
            <person name="Sulston J.E."/>
            <person name="Swann R.M."/>
            <person name="Vaudin M."/>
            <person name="Wall M."/>
            <person name="Wallis J.M."/>
            <person name="Whiteley M.N."/>
            <person name="Willey D.L."/>
            <person name="Williams L."/>
            <person name="Williams S.A."/>
            <person name="Williamson H."/>
            <person name="Wilmer T.E."/>
            <person name="Wilming L."/>
            <person name="Wright C.L."/>
            <person name="Hubbard T."/>
            <person name="Bentley D.R."/>
            <person name="Beck S."/>
            <person name="Rogers J."/>
            <person name="Shimizu N."/>
            <person name="Minoshima S."/>
            <person name="Kawasaki K."/>
            <person name="Sasaki T."/>
            <person name="Asakawa S."/>
            <person name="Kudoh J."/>
            <person name="Shintani A."/>
            <person name="Shibuya K."/>
            <person name="Yoshizaki Y."/>
            <person name="Aoki N."/>
            <person name="Mitsuyama S."/>
            <person name="Roe B.A."/>
            <person name="Chen F."/>
            <person name="Chu L."/>
            <person name="Crabtree J."/>
            <person name="Deschamps S."/>
            <person name="Do A."/>
            <person name="Do T."/>
            <person name="Dorman A."/>
            <person name="Fang F."/>
            <person name="Fu Y."/>
            <person name="Hu P."/>
            <person name="Hua A."/>
            <person name="Kenton S."/>
            <person name="Lai H."/>
            <person name="Lao H.I."/>
            <person name="Lewis J."/>
            <person name="Lewis S."/>
            <person name="Lin S.-P."/>
            <person name="Loh P."/>
            <person name="Malaj E."/>
            <person name="Nguyen T."/>
            <person name="Pan H."/>
            <person name="Phan S."/>
            <person name="Qi S."/>
            <person name="Qian Y."/>
            <person name="Ray L."/>
            <person name="Ren Q."/>
            <person name="Shaull S."/>
            <person name="Sloan D."/>
            <person name="Song L."/>
            <person name="Wang Q."/>
            <person name="Wang Y."/>
            <person name="Wang Z."/>
            <person name="White J."/>
            <person name="Willingham D."/>
            <person name="Wu H."/>
            <person name="Yao Z."/>
            <person name="Zhan M."/>
            <person name="Zhang G."/>
            <person name="Chissoe S."/>
            <person name="Murray J."/>
            <person name="Miller N."/>
            <person name="Minx P."/>
            <person name="Fulton R."/>
            <person name="Johnson D."/>
            <person name="Bemis G."/>
            <person name="Bentley D."/>
            <person name="Bradshaw H."/>
            <person name="Bourne S."/>
            <person name="Cordes M."/>
            <person name="Du Z."/>
            <person name="Fulton L."/>
            <person name="Goela D."/>
            <person name="Graves T."/>
            <person name="Hawkins J."/>
            <person name="Hinds K."/>
            <person name="Kemp K."/>
            <person name="Latreille P."/>
            <person name="Layman D."/>
            <person name="Ozersky P."/>
            <person name="Rohlfing T."/>
            <person name="Scheet P."/>
            <person name="Walker C."/>
            <person name="Wamsley A."/>
            <person name="Wohldmann P."/>
            <person name="Pepin K."/>
            <person name="Nelson J."/>
            <person name="Korf I."/>
            <person name="Bedell J.A."/>
            <person name="Hillier L.W."/>
            <person name="Mardis E."/>
            <person name="Waterston R."/>
            <person name="Wilson R."/>
            <person name="Emanuel B.S."/>
            <person name="Shaikh T."/>
            <person name="Kurahashi H."/>
            <person name="Saitta S."/>
            <person name="Budarf M.L."/>
            <person name="McDermid H.E."/>
            <person name="Johnson A."/>
            <person name="Wong A.C.C."/>
            <person name="Morrow B.E."/>
            <person name="Edelmann L."/>
            <person name="Kim U.J."/>
            <person name="Shizuya H."/>
            <person name="Simon M.I."/>
            <person name="Dumanski J.P."/>
            <person name="Peyrard M."/>
            <person name="Kedra D."/>
            <person name="Seroussi E."/>
            <person name="Fransson I."/>
            <person name="Tapia I."/>
            <person name="Bruder C.E."/>
            <person name="O'Brien K.P."/>
            <person name="Wilkinson P."/>
            <person name="Bodenteich A."/>
            <person name="Hartman K."/>
            <person name="Hu X."/>
            <person name="Khan A.S."/>
            <person name="Lane L."/>
            <person name="Tilahun Y."/>
            <person name="Wright H."/>
        </authorList>
    </citation>
    <scope>NUCLEOTIDE SEQUENCE [LARGE SCALE GENOMIC DNA]</scope>
</reference>
<reference key="7">
    <citation type="journal article" date="2004" name="Genome Res.">
        <title>The status, quality, and expansion of the NIH full-length cDNA project: the Mammalian Gene Collection (MGC).</title>
        <authorList>
            <consortium name="The MGC Project Team"/>
        </authorList>
    </citation>
    <scope>NUCLEOTIDE SEQUENCE [LARGE SCALE MRNA] (ISOFORM 4)</scope>
    <source>
        <tissue>Colon</tissue>
    </source>
</reference>
<reference key="8">
    <citation type="journal article" date="2010" name="Sci. Signal.">
        <title>Quantitative phosphoproteomics reveals widespread full phosphorylation site occupancy during mitosis.</title>
        <authorList>
            <person name="Olsen J.V."/>
            <person name="Vermeulen M."/>
            <person name="Santamaria A."/>
            <person name="Kumar C."/>
            <person name="Miller M.L."/>
            <person name="Jensen L.J."/>
            <person name="Gnad F."/>
            <person name="Cox J."/>
            <person name="Jensen T.S."/>
            <person name="Nigg E.A."/>
            <person name="Brunak S."/>
            <person name="Mann M."/>
        </authorList>
    </citation>
    <scope>PHOSPHORYLATION [LARGE SCALE ANALYSIS] AT SER-282</scope>
    <scope>IDENTIFICATION BY MASS SPECTROMETRY [LARGE SCALE ANALYSIS]</scope>
    <source>
        <tissue>Cervix carcinoma</tissue>
    </source>
</reference>
<reference key="9">
    <citation type="journal article" date="2013" name="J. Proteome Res.">
        <title>Toward a comprehensive characterization of a human cancer cell phosphoproteome.</title>
        <authorList>
            <person name="Zhou H."/>
            <person name="Di Palma S."/>
            <person name="Preisinger C."/>
            <person name="Peng M."/>
            <person name="Polat A.N."/>
            <person name="Heck A.J."/>
            <person name="Mohammed S."/>
        </authorList>
    </citation>
    <scope>PHOSPHORYLATION [LARGE SCALE ANALYSIS] AT SER-282</scope>
    <scope>IDENTIFICATION BY MASS SPECTROMETRY [LARGE SCALE ANALYSIS]</scope>
    <source>
        <tissue>Cervix carcinoma</tissue>
    </source>
</reference>
<reference key="10">
    <citation type="journal article" date="2015" name="Mol. Cell. Biol.">
        <title>PATZ1 Is a DNA Damage-Responsive Transcription Factor That Inhibits p53 Function.</title>
        <authorList>
            <person name="Keskin N."/>
            <person name="Deniz E."/>
            <person name="Eryilmaz J."/>
            <person name="Un M."/>
            <person name="Batur T."/>
            <person name="Ersahin T."/>
            <person name="Cetin Atalay R."/>
            <person name="Sakaguchi S."/>
            <person name="Ellmeier W."/>
            <person name="Erman B."/>
        </authorList>
    </citation>
    <scope>FUNCTION</scope>
    <scope>INTERACTION WITH TP53</scope>
</reference>
<reference key="11">
    <citation type="journal article" date="2017" name="Nat. Struct. Mol. Biol.">
        <title>Site-specific mapping of the human SUMO proteome reveals co-modification with phosphorylation.</title>
        <authorList>
            <person name="Hendriks I.A."/>
            <person name="Lyon D."/>
            <person name="Young C."/>
            <person name="Jensen L.J."/>
            <person name="Vertegaal A.C."/>
            <person name="Nielsen M.L."/>
        </authorList>
    </citation>
    <scope>SUMOYLATION [LARGE SCALE ANALYSIS] AT LYS-112 AND LYS-272</scope>
    <scope>IDENTIFICATION BY MASS SPECTROMETRY [LARGE SCALE ANALYSIS]</scope>
</reference>
<reference key="12">
    <citation type="journal article" date="2019" name="Cell Rep.">
        <title>The Transcription Factor MAZR/PATZ1 Regulates the Development of FOXP3+ Regulatory T Cells.</title>
        <authorList>
            <person name="Andersen L."/>
            <person name="Guelich A.F."/>
            <person name="Alteneder M."/>
            <person name="Preglej T."/>
            <person name="Orola M.J."/>
            <person name="Dhele N."/>
            <person name="Stolz V."/>
            <person name="Schebesta A."/>
            <person name="Hamminger P."/>
            <person name="Hladik A."/>
            <person name="Floess S."/>
            <person name="Krausgruber T."/>
            <person name="Faux T."/>
            <person name="Andrabi S.B.A."/>
            <person name="Huehn J."/>
            <person name="Knapp S."/>
            <person name="Sparwasser T."/>
            <person name="Bock C."/>
            <person name="Laiho A."/>
            <person name="Elo L.L."/>
            <person name="Rasool O."/>
            <person name="Lahesmaa R."/>
            <person name="Sakaguchi S."/>
            <person name="Ellmeier W."/>
        </authorList>
    </citation>
    <scope>FUNCTION</scope>
</reference>
<reference key="13">
    <citation type="journal article" date="2019" name="Biochem. Biophys. Res. Commun.">
        <title>PATZ1 is required for efficient HIV-1 infection.</title>
        <authorList>
            <person name="Aziati I.D."/>
            <person name="Yoshida T."/>
            <person name="Hamano A."/>
            <person name="Maeda K."/>
            <person name="Takeuchi H."/>
            <person name="Yamaoka S."/>
        </authorList>
    </citation>
    <scope>FUNCTION (MICROBIAL INFECTION)</scope>
</reference>
<reference key="14">
    <citation type="submission" date="2008-04" db="PDB data bank">
        <title>Solution structure of zinc finger domains in zinc finger protein 278.</title>
        <authorList>
            <consortium name="RIKEN structural genomics initiative (RSGI)"/>
        </authorList>
    </citation>
    <scope>STRUCTURE BY NMR OF 359-437</scope>
</reference>
<accession>Q9HBE1</accession>
<accession>Q9HBE2</accession>
<accession>Q9HBE3</accession>
<accession>Q9P1A9</accession>
<accession>Q9UDU0</accession>
<accession>Q9Y529</accession>
<gene>
    <name type="primary">PATZ1</name>
    <name type="synonym">PATZ</name>
    <name type="synonym">RIAZ</name>
    <name type="synonym">ZBTB19</name>
    <name type="synonym">ZNF278</name>
    <name type="synonym">ZSG</name>
</gene>
<dbReference type="EMBL" id="AF119256">
    <property type="protein sequence ID" value="AAF32518.1"/>
    <property type="molecule type" value="mRNA"/>
</dbReference>
<dbReference type="EMBL" id="AF254082">
    <property type="protein sequence ID" value="AAG09031.1"/>
    <property type="molecule type" value="mRNA"/>
</dbReference>
<dbReference type="EMBL" id="AF254083">
    <property type="protein sequence ID" value="AAG09032.1"/>
    <property type="molecule type" value="mRNA"/>
</dbReference>
<dbReference type="EMBL" id="AF254084">
    <property type="protein sequence ID" value="AAG09033.1"/>
    <property type="molecule type" value="mRNA"/>
</dbReference>
<dbReference type="EMBL" id="AF254085">
    <property type="protein sequence ID" value="AAG09034.1"/>
    <property type="molecule type" value="mRNA"/>
</dbReference>
<dbReference type="EMBL" id="AY028384">
    <property type="protein sequence ID" value="AAK19024.1"/>
    <property type="molecule type" value="mRNA"/>
</dbReference>
<dbReference type="EMBL" id="AL096880">
    <property type="protein sequence ID" value="CAB51404.1"/>
    <property type="status" value="ALT_INIT"/>
    <property type="molecule type" value="mRNA"/>
</dbReference>
<dbReference type="EMBL" id="CR456613">
    <property type="protein sequence ID" value="CAG30499.1"/>
    <property type="molecule type" value="mRNA"/>
</dbReference>
<dbReference type="EMBL" id="AC005003">
    <property type="protein sequence ID" value="AAF01349.1"/>
    <property type="molecule type" value="Genomic_DNA"/>
</dbReference>
<dbReference type="EMBL" id="BC021091">
    <property type="protein sequence ID" value="AAH21091.1"/>
    <property type="molecule type" value="mRNA"/>
</dbReference>
<dbReference type="CCDS" id="CCDS13894.1">
    <molecule id="Q9HBE1-1"/>
</dbReference>
<dbReference type="CCDS" id="CCDS13895.1">
    <molecule id="Q9HBE1-3"/>
</dbReference>
<dbReference type="CCDS" id="CCDS13896.1">
    <molecule id="Q9HBE1-4"/>
</dbReference>
<dbReference type="CCDS" id="CCDS46691.1">
    <molecule id="Q9HBE1-2"/>
</dbReference>
<dbReference type="RefSeq" id="NP_055138.2">
    <molecule id="Q9HBE1-1"/>
    <property type="nucleotide sequence ID" value="NM_014323.2"/>
</dbReference>
<dbReference type="RefSeq" id="NP_114439.1">
    <molecule id="Q9HBE1-3"/>
    <property type="nucleotide sequence ID" value="NM_032050.2"/>
</dbReference>
<dbReference type="RefSeq" id="NP_114440.1">
    <molecule id="Q9HBE1-4"/>
    <property type="nucleotide sequence ID" value="NM_032051.2"/>
</dbReference>
<dbReference type="RefSeq" id="NP_114441.1">
    <molecule id="Q9HBE1-2"/>
    <property type="nucleotide sequence ID" value="NM_032052.2"/>
</dbReference>
<dbReference type="PDB" id="2EPP">
    <property type="method" value="NMR"/>
    <property type="chains" value="A=286-338"/>
</dbReference>
<dbReference type="PDB" id="2EPQ">
    <property type="method" value="NMR"/>
    <property type="chains" value="A=380-411"/>
</dbReference>
<dbReference type="PDB" id="2EPR">
    <property type="method" value="NMR"/>
    <property type="chains" value="A=350-384"/>
</dbReference>
<dbReference type="PDB" id="2EPS">
    <property type="method" value="NMR"/>
    <property type="chains" value="A=408-445"/>
</dbReference>
<dbReference type="PDB" id="2YT9">
    <property type="method" value="NMR"/>
    <property type="chains" value="A=355-436"/>
</dbReference>
<dbReference type="PDBsum" id="2EPP"/>
<dbReference type="PDBsum" id="2EPQ"/>
<dbReference type="PDBsum" id="2EPR"/>
<dbReference type="PDBsum" id="2EPS"/>
<dbReference type="PDBsum" id="2YT9"/>
<dbReference type="BMRB" id="Q9HBE1"/>
<dbReference type="SMR" id="Q9HBE1"/>
<dbReference type="BioGRID" id="117133">
    <property type="interactions" value="178"/>
</dbReference>
<dbReference type="CORUM" id="Q9HBE1"/>
<dbReference type="FunCoup" id="Q9HBE1">
    <property type="interactions" value="3356"/>
</dbReference>
<dbReference type="IntAct" id="Q9HBE1">
    <property type="interactions" value="149"/>
</dbReference>
<dbReference type="MINT" id="Q9HBE1"/>
<dbReference type="STRING" id="9606.ENSP00000266269"/>
<dbReference type="GlyGen" id="Q9HBE1">
    <property type="glycosylation" value="2 sites, 1 N-linked glycan (1 site), 1 O-linked glycan (1 site)"/>
</dbReference>
<dbReference type="iPTMnet" id="Q9HBE1"/>
<dbReference type="PhosphoSitePlus" id="Q9HBE1"/>
<dbReference type="BioMuta" id="PATZ1"/>
<dbReference type="DMDM" id="38258840"/>
<dbReference type="jPOST" id="Q9HBE1"/>
<dbReference type="MassIVE" id="Q9HBE1"/>
<dbReference type="PaxDb" id="9606-ENSP00000266269"/>
<dbReference type="PeptideAtlas" id="Q9HBE1"/>
<dbReference type="ProteomicsDB" id="81529">
    <molecule id="Q9HBE1-1"/>
</dbReference>
<dbReference type="ProteomicsDB" id="81530">
    <molecule id="Q9HBE1-2"/>
</dbReference>
<dbReference type="ProteomicsDB" id="81531">
    <molecule id="Q9HBE1-3"/>
</dbReference>
<dbReference type="ProteomicsDB" id="81532">
    <molecule id="Q9HBE1-4"/>
</dbReference>
<dbReference type="Pumba" id="Q9HBE1"/>
<dbReference type="Antibodypedia" id="25019">
    <property type="antibodies" value="182 antibodies from 25 providers"/>
</dbReference>
<dbReference type="DNASU" id="23598"/>
<dbReference type="Ensembl" id="ENST00000215919.3">
    <molecule id="Q9HBE1-4"/>
    <property type="protein sequence ID" value="ENSP00000215919.3"/>
    <property type="gene ID" value="ENSG00000100105.18"/>
</dbReference>
<dbReference type="Ensembl" id="ENST00000266269.10">
    <molecule id="Q9HBE1-1"/>
    <property type="protein sequence ID" value="ENSP00000266269.5"/>
    <property type="gene ID" value="ENSG00000100105.18"/>
</dbReference>
<dbReference type="Ensembl" id="ENST00000351933.8">
    <molecule id="Q9HBE1-3"/>
    <property type="protein sequence ID" value="ENSP00000337520.4"/>
    <property type="gene ID" value="ENSG00000100105.18"/>
</dbReference>
<dbReference type="Ensembl" id="ENST00000405309.7">
    <molecule id="Q9HBE1-2"/>
    <property type="protein sequence ID" value="ENSP00000384173.3"/>
    <property type="gene ID" value="ENSG00000100105.18"/>
</dbReference>
<dbReference type="GeneID" id="23598"/>
<dbReference type="KEGG" id="hsa:23598"/>
<dbReference type="MANE-Select" id="ENST00000266269.10">
    <property type="protein sequence ID" value="ENSP00000266269.5"/>
    <property type="RefSeq nucleotide sequence ID" value="NM_014323.3"/>
    <property type="RefSeq protein sequence ID" value="NP_055138.2"/>
</dbReference>
<dbReference type="UCSC" id="uc003akp.4">
    <molecule id="Q9HBE1-1"/>
    <property type="organism name" value="human"/>
</dbReference>
<dbReference type="AGR" id="HGNC:13071"/>
<dbReference type="CTD" id="23598"/>
<dbReference type="DisGeNET" id="23598"/>
<dbReference type="GeneCards" id="PATZ1"/>
<dbReference type="HGNC" id="HGNC:13071">
    <property type="gene designation" value="PATZ1"/>
</dbReference>
<dbReference type="HPA" id="ENSG00000100105">
    <property type="expression patterns" value="Low tissue specificity"/>
</dbReference>
<dbReference type="MalaCards" id="PATZ1"/>
<dbReference type="MIM" id="605165">
    <property type="type" value="gene"/>
</dbReference>
<dbReference type="neXtProt" id="NX_Q9HBE1"/>
<dbReference type="OpenTargets" id="ENSG00000100105"/>
<dbReference type="PharmGKB" id="PA162398806"/>
<dbReference type="VEuPathDB" id="HostDB:ENSG00000100105"/>
<dbReference type="eggNOG" id="KOG1721">
    <property type="taxonomic scope" value="Eukaryota"/>
</dbReference>
<dbReference type="GeneTree" id="ENSGT00940000159296"/>
<dbReference type="HOGENOM" id="CLU_030477_1_0_1"/>
<dbReference type="InParanoid" id="Q9HBE1"/>
<dbReference type="OMA" id="TKEGQKC"/>
<dbReference type="OrthoDB" id="10072647at2759"/>
<dbReference type="PAN-GO" id="Q9HBE1">
    <property type="GO annotations" value="4 GO annotations based on evolutionary models"/>
</dbReference>
<dbReference type="PhylomeDB" id="Q9HBE1"/>
<dbReference type="TreeFam" id="TF331686"/>
<dbReference type="PathwayCommons" id="Q9HBE1"/>
<dbReference type="SignaLink" id="Q9HBE1"/>
<dbReference type="SIGNOR" id="Q9HBE1"/>
<dbReference type="BioGRID-ORCS" id="23598">
    <property type="hits" value="26 hits in 1217 CRISPR screens"/>
</dbReference>
<dbReference type="ChiTaRS" id="PATZ1">
    <property type="organism name" value="human"/>
</dbReference>
<dbReference type="EvolutionaryTrace" id="Q9HBE1"/>
<dbReference type="GeneWiki" id="PATZ1"/>
<dbReference type="GenomeRNAi" id="23598"/>
<dbReference type="Pharos" id="Q9HBE1">
    <property type="development level" value="Tbio"/>
</dbReference>
<dbReference type="PRO" id="PR:Q9HBE1"/>
<dbReference type="Proteomes" id="UP000005640">
    <property type="component" value="Chromosome 22"/>
</dbReference>
<dbReference type="RNAct" id="Q9HBE1">
    <property type="molecule type" value="protein"/>
</dbReference>
<dbReference type="Bgee" id="ENSG00000100105">
    <property type="expression patterns" value="Expressed in ventricular zone and 190 other cell types or tissues"/>
</dbReference>
<dbReference type="ExpressionAtlas" id="Q9HBE1">
    <property type="expression patterns" value="baseline and differential"/>
</dbReference>
<dbReference type="GO" id="GO:0001673">
    <property type="term" value="C:male germ cell nucleus"/>
    <property type="evidence" value="ECO:0007669"/>
    <property type="project" value="Ensembl"/>
</dbReference>
<dbReference type="GO" id="GO:0005654">
    <property type="term" value="C:nucleoplasm"/>
    <property type="evidence" value="ECO:0000314"/>
    <property type="project" value="HPA"/>
</dbReference>
<dbReference type="GO" id="GO:0005634">
    <property type="term" value="C:nucleus"/>
    <property type="evidence" value="ECO:0000304"/>
    <property type="project" value="UniProtKB"/>
</dbReference>
<dbReference type="GO" id="GO:0003682">
    <property type="term" value="F:chromatin binding"/>
    <property type="evidence" value="ECO:0007669"/>
    <property type="project" value="Ensembl"/>
</dbReference>
<dbReference type="GO" id="GO:0003677">
    <property type="term" value="F:DNA binding"/>
    <property type="evidence" value="ECO:0000303"/>
    <property type="project" value="UniProtKB"/>
</dbReference>
<dbReference type="GO" id="GO:0001227">
    <property type="term" value="F:DNA-binding transcription repressor activity, RNA polymerase II-specific"/>
    <property type="evidence" value="ECO:0000318"/>
    <property type="project" value="GO_Central"/>
</dbReference>
<dbReference type="GO" id="GO:0000978">
    <property type="term" value="F:RNA polymerase II cis-regulatory region sequence-specific DNA binding"/>
    <property type="evidence" value="ECO:0000318"/>
    <property type="project" value="GO_Central"/>
</dbReference>
<dbReference type="GO" id="GO:0031625">
    <property type="term" value="F:ubiquitin protein ligase binding"/>
    <property type="evidence" value="ECO:0000353"/>
    <property type="project" value="ARUK-UCL"/>
</dbReference>
<dbReference type="GO" id="GO:0008270">
    <property type="term" value="F:zinc ion binding"/>
    <property type="evidence" value="ECO:0007669"/>
    <property type="project" value="UniProtKB-KW"/>
</dbReference>
<dbReference type="GO" id="GO:0008584">
    <property type="term" value="P:male gonad development"/>
    <property type="evidence" value="ECO:0007669"/>
    <property type="project" value="Ensembl"/>
</dbReference>
<dbReference type="GO" id="GO:0045892">
    <property type="term" value="P:negative regulation of DNA-templated transcription"/>
    <property type="evidence" value="ECO:0000304"/>
    <property type="project" value="UniProtKB"/>
</dbReference>
<dbReference type="GO" id="GO:0010596">
    <property type="term" value="P:negative regulation of endothelial cell migration"/>
    <property type="evidence" value="ECO:0007669"/>
    <property type="project" value="Ensembl"/>
</dbReference>
<dbReference type="GO" id="GO:0000122">
    <property type="term" value="P:negative regulation of transcription by RNA polymerase II"/>
    <property type="evidence" value="ECO:0000318"/>
    <property type="project" value="GO_Central"/>
</dbReference>
<dbReference type="GO" id="GO:0045893">
    <property type="term" value="P:positive regulation of DNA-templated transcription"/>
    <property type="evidence" value="ECO:0007669"/>
    <property type="project" value="Ensembl"/>
</dbReference>
<dbReference type="GO" id="GO:0001817">
    <property type="term" value="P:regulation of cytokine production"/>
    <property type="evidence" value="ECO:0000318"/>
    <property type="project" value="GO_Central"/>
</dbReference>
<dbReference type="GO" id="GO:0006355">
    <property type="term" value="P:regulation of DNA-templated transcription"/>
    <property type="evidence" value="ECO:0000304"/>
    <property type="project" value="UniProtKB"/>
</dbReference>
<dbReference type="GO" id="GO:0002682">
    <property type="term" value="P:regulation of immune system process"/>
    <property type="evidence" value="ECO:0000318"/>
    <property type="project" value="GO_Central"/>
</dbReference>
<dbReference type="GO" id="GO:0007283">
    <property type="term" value="P:spermatogenesis"/>
    <property type="evidence" value="ECO:0007669"/>
    <property type="project" value="Ensembl"/>
</dbReference>
<dbReference type="GO" id="GO:0030217">
    <property type="term" value="P:T cell differentiation"/>
    <property type="evidence" value="ECO:0007669"/>
    <property type="project" value="Ensembl"/>
</dbReference>
<dbReference type="CDD" id="cd18207">
    <property type="entry name" value="BTB_POZ_ZBTB19_PATZ1"/>
    <property type="match status" value="1"/>
</dbReference>
<dbReference type="FunFam" id="3.30.160.60:FF:000780">
    <property type="entry name" value="myc-associated zinc finger protein isoform X1"/>
    <property type="match status" value="1"/>
</dbReference>
<dbReference type="FunFam" id="3.30.160.60:FF:000147">
    <property type="entry name" value="POZ-, AT hook-, and zinc finger-containing protein 1"/>
    <property type="match status" value="1"/>
</dbReference>
<dbReference type="FunFam" id="3.30.160.60:FF:000404">
    <property type="entry name" value="POZ-, AT hook-, and zinc finger-containing protein 1"/>
    <property type="match status" value="1"/>
</dbReference>
<dbReference type="FunFam" id="3.30.160.60:FF:000513">
    <property type="entry name" value="POZ-, AT hook-, and zinc finger-containing protein 1 isoform X1"/>
    <property type="match status" value="1"/>
</dbReference>
<dbReference type="FunFam" id="3.30.160.60:FF:000945">
    <property type="entry name" value="POZ-, AT hook-, and zinc finger-containing protein 1 isoform X3"/>
    <property type="match status" value="1"/>
</dbReference>
<dbReference type="FunFam" id="3.30.710.10:FF:000028">
    <property type="entry name" value="POZ-, AT hook-, and zinc finger-containing protein 1 isoform X4"/>
    <property type="match status" value="1"/>
</dbReference>
<dbReference type="Gene3D" id="3.30.160.60">
    <property type="entry name" value="Classic Zinc Finger"/>
    <property type="match status" value="6"/>
</dbReference>
<dbReference type="Gene3D" id="3.30.710.10">
    <property type="entry name" value="Potassium Channel Kv1.1, Chain A"/>
    <property type="match status" value="1"/>
</dbReference>
<dbReference type="InterPro" id="IPR000210">
    <property type="entry name" value="BTB/POZ_dom"/>
</dbReference>
<dbReference type="InterPro" id="IPR000637">
    <property type="entry name" value="HMGI/Y_DNA-bd_CS"/>
</dbReference>
<dbReference type="InterPro" id="IPR011333">
    <property type="entry name" value="SKP1/BTB/POZ_sf"/>
</dbReference>
<dbReference type="InterPro" id="IPR036236">
    <property type="entry name" value="Znf_C2H2_sf"/>
</dbReference>
<dbReference type="InterPro" id="IPR013087">
    <property type="entry name" value="Znf_C2H2_type"/>
</dbReference>
<dbReference type="PANTHER" id="PTHR24394">
    <property type="entry name" value="ZINC FINGER PROTEIN"/>
    <property type="match status" value="1"/>
</dbReference>
<dbReference type="PANTHER" id="PTHR24394:SF44">
    <property type="entry name" value="ZINC FINGER PROTEIN 271-LIKE"/>
    <property type="match status" value="1"/>
</dbReference>
<dbReference type="Pfam" id="PF00651">
    <property type="entry name" value="BTB"/>
    <property type="match status" value="1"/>
</dbReference>
<dbReference type="Pfam" id="PF00096">
    <property type="entry name" value="zf-C2H2"/>
    <property type="match status" value="5"/>
</dbReference>
<dbReference type="Pfam" id="PF13912">
    <property type="entry name" value="zf-C2H2_6"/>
    <property type="match status" value="1"/>
</dbReference>
<dbReference type="Pfam" id="PF16637">
    <property type="entry name" value="zf-C2H2_assoc3"/>
    <property type="match status" value="1"/>
</dbReference>
<dbReference type="SMART" id="SM00225">
    <property type="entry name" value="BTB"/>
    <property type="match status" value="1"/>
</dbReference>
<dbReference type="SMART" id="SM00355">
    <property type="entry name" value="ZnF_C2H2"/>
    <property type="match status" value="8"/>
</dbReference>
<dbReference type="SUPFAM" id="SSF57667">
    <property type="entry name" value="beta-beta-alpha zinc fingers"/>
    <property type="match status" value="4"/>
</dbReference>
<dbReference type="SUPFAM" id="SSF54695">
    <property type="entry name" value="POZ domain"/>
    <property type="match status" value="1"/>
</dbReference>
<dbReference type="PROSITE" id="PS50097">
    <property type="entry name" value="BTB"/>
    <property type="match status" value="1"/>
</dbReference>
<dbReference type="PROSITE" id="PS00354">
    <property type="entry name" value="HMGI_Y"/>
    <property type="match status" value="1"/>
</dbReference>
<dbReference type="PROSITE" id="PS00028">
    <property type="entry name" value="ZINC_FINGER_C2H2_1"/>
    <property type="match status" value="7"/>
</dbReference>
<dbReference type="PROSITE" id="PS50157">
    <property type="entry name" value="ZINC_FINGER_C2H2_2"/>
    <property type="match status" value="7"/>
</dbReference>
<comment type="function">
    <text evidence="5 7 9">Transcriptional regulator that plays a role in many biological processes such as embryogenesis, senescence, T-cell development or neurogenesis (PubMed:10713105, PubMed:25755280, PubMed:31875552). Interacts with the TP53 protein to control genes that are important in proliferation and in the DNA-damage response. Mechanistically, the interaction inhibits the DNA binding and transcriptional activity of TP53/p53 (PubMed:25755280). Part of the transcriptional network modulating regulatory T-cell development and controls the generation of the regulatory T-cell pool under homeostatic conditions (PubMed:31875552).</text>
</comment>
<comment type="function">
    <text evidence="8">(Microbial infection) Plays a positive role in viral cDNA synthesis.</text>
</comment>
<comment type="subunit">
    <text evidence="1 5 7">Homodimer (By similarity). Interacts with RNF4 (PubMed:10713105). Interacts (via C-terminus) with TP53; this interaction inhibits TP53 ability to activate transcription (PubMed:25755280).</text>
</comment>
<comment type="interaction">
    <interactant intactId="EBI-5459863">
        <id>Q9HBE1</id>
    </interactant>
    <interactant intactId="EBI-356498">
        <id>P62258</id>
        <label>YWHAE</label>
    </interactant>
    <organismsDiffer>false</organismsDiffer>
    <experiments>2</experiments>
</comment>
<comment type="interaction">
    <interactant intactId="EBI-11022007">
        <id>Q9HBE1-4</id>
    </interactant>
    <interactant intactId="EBI-12318443">
        <id>Q8NFV4-4</id>
        <label>ABHD11</label>
    </interactant>
    <organismsDiffer>false</organismsDiffer>
    <experiments>3</experiments>
</comment>
<comment type="interaction">
    <interactant intactId="EBI-11022007">
        <id>Q9HBE1-4</id>
    </interactant>
    <interactant intactId="EBI-11976299">
        <id>Q5BKX5-3</id>
        <label>ACTMAP</label>
    </interactant>
    <organismsDiffer>false</organismsDiffer>
    <experiments>3</experiments>
</comment>
<comment type="interaction">
    <interactant intactId="EBI-11022007">
        <id>Q9HBE1-4</id>
    </interactant>
    <interactant intactId="EBI-357530">
        <id>Q9ULX6</id>
        <label>AKAP8L</label>
    </interactant>
    <organismsDiffer>false</organismsDiffer>
    <experiments>3</experiments>
</comment>
<comment type="interaction">
    <interactant intactId="EBI-11022007">
        <id>Q9HBE1-4</id>
    </interactant>
    <interactant intactId="EBI-12102070">
        <id>Q9NXR5-2</id>
        <label>ANKRD10</label>
    </interactant>
    <organismsDiffer>false</organismsDiffer>
    <experiments>3</experiments>
</comment>
<comment type="interaction">
    <interactant intactId="EBI-11022007">
        <id>Q9HBE1-4</id>
    </interactant>
    <interactant intactId="EBI-946046">
        <id>P54252</id>
        <label>ATXN3</label>
    </interactant>
    <organismsDiffer>false</organismsDiffer>
    <experiments>3</experiments>
</comment>
<comment type="interaction">
    <interactant intactId="EBI-11022007">
        <id>Q9HBE1-4</id>
    </interactant>
    <interactant intactId="EBI-11983447">
        <id>Q8N9W6-4</id>
        <label>BOLL</label>
    </interactant>
    <organismsDiffer>false</organismsDiffer>
    <experiments>3</experiments>
</comment>
<comment type="interaction">
    <interactant intactId="EBI-11022007">
        <id>Q9HBE1-4</id>
    </interactant>
    <interactant intactId="EBI-953896">
        <id>Q9NP55</id>
        <label>BPIFA1</label>
    </interactant>
    <organismsDiffer>false</organismsDiffer>
    <experiments>3</experiments>
</comment>
<comment type="interaction">
    <interactant intactId="EBI-11022007">
        <id>Q9HBE1-4</id>
    </interactant>
    <interactant intactId="EBI-744556">
        <id>Q96HB5</id>
        <label>CCDC120</label>
    </interactant>
    <organismsDiffer>false</organismsDiffer>
    <experiments>3</experiments>
</comment>
<comment type="interaction">
    <interactant intactId="EBI-11022007">
        <id>Q9HBE1-4</id>
    </interactant>
    <interactant intactId="EBI-742887">
        <id>Q8TAP6</id>
        <label>CEP76</label>
    </interactant>
    <organismsDiffer>false</organismsDiffer>
    <experiments>3</experiments>
</comment>
<comment type="interaction">
    <interactant intactId="EBI-11022007">
        <id>Q9HBE1-4</id>
    </interactant>
    <interactant intactId="EBI-718615">
        <id>Q9H5F2</id>
        <label>CFAP68</label>
    </interactant>
    <organismsDiffer>false</organismsDiffer>
    <experiments>3</experiments>
</comment>
<comment type="interaction">
    <interactant intactId="EBI-11022007">
        <id>Q9HBE1-4</id>
    </interactant>
    <interactant intactId="EBI-11523759">
        <id>Q8N684-3</id>
        <label>CPSF7</label>
    </interactant>
    <organismsDiffer>false</organismsDiffer>
    <experiments>3</experiments>
</comment>
<comment type="interaction">
    <interactant intactId="EBI-11022007">
        <id>Q9HBE1-4</id>
    </interactant>
    <interactant intactId="EBI-3867333">
        <id>A8MQ03</id>
        <label>CYSRT1</label>
    </interactant>
    <organismsDiffer>false</organismsDiffer>
    <experiments>3</experiments>
</comment>
<comment type="interaction">
    <interactant intactId="EBI-11022007">
        <id>Q9HBE1-4</id>
    </interactant>
    <interactant intactId="EBI-724310">
        <id>Q15038</id>
        <label>DAZAP2</label>
    </interactant>
    <organismsDiffer>false</organismsDiffer>
    <experiments>3</experiments>
</comment>
<comment type="interaction">
    <interactant intactId="EBI-11022007">
        <id>Q9HBE1-4</id>
    </interactant>
    <interactant intactId="EBI-10976677">
        <id>G5E9A7</id>
        <label>DMWD</label>
    </interactant>
    <organismsDiffer>false</organismsDiffer>
    <experiments>3</experiments>
</comment>
<comment type="interaction">
    <interactant intactId="EBI-11022007">
        <id>Q9HBE1-4</id>
    </interactant>
    <interactant intactId="EBI-739789">
        <id>Q92997</id>
        <label>DVL3</label>
    </interactant>
    <organismsDiffer>false</organismsDiffer>
    <experiments>3</experiments>
</comment>
<comment type="interaction">
    <interactant intactId="EBI-11022007">
        <id>Q9HBE1-4</id>
    </interactant>
    <interactant intactId="EBI-12807776">
        <id>O00167-2</id>
        <label>EYA2</label>
    </interactant>
    <organismsDiffer>false</organismsDiffer>
    <experiments>3</experiments>
</comment>
<comment type="interaction">
    <interactant intactId="EBI-11022007">
        <id>Q9HBE1-4</id>
    </interactant>
    <interactant intactId="EBI-11978259">
        <id>Q92567-2</id>
        <label>FAM168A</label>
    </interactant>
    <organismsDiffer>false</organismsDiffer>
    <experiments>3</experiments>
</comment>
<comment type="interaction">
    <interactant intactId="EBI-11022007">
        <id>Q9HBE1-4</id>
    </interactant>
    <interactant intactId="EBI-12193763">
        <id>A1KXE4-2</id>
        <label>FAM168B</label>
    </interactant>
    <organismsDiffer>false</organismsDiffer>
    <experiments>3</experiments>
</comment>
<comment type="interaction">
    <interactant intactId="EBI-11022007">
        <id>Q9HBE1-4</id>
    </interactant>
    <interactant intactId="EBI-5916454">
        <id>A6NEM1</id>
        <label>GOLGA6L9</label>
    </interactant>
    <organismsDiffer>false</organismsDiffer>
    <experiments>3</experiments>
</comment>
<comment type="interaction">
    <interactant intactId="EBI-11022007">
        <id>Q9HBE1-4</id>
    </interactant>
    <interactant intactId="EBI-751540">
        <id>O95872</id>
        <label>GPANK1</label>
    </interactant>
    <organismsDiffer>false</organismsDiffer>
    <experiments>3</experiments>
</comment>
<comment type="interaction">
    <interactant intactId="EBI-11022007">
        <id>Q9HBE1-4</id>
    </interactant>
    <interactant intactId="EBI-352986">
        <id>P52597</id>
        <label>HNRNPF</label>
    </interactant>
    <organismsDiffer>false</organismsDiffer>
    <experiments>3</experiments>
</comment>
<comment type="interaction">
    <interactant intactId="EBI-11022007">
        <id>Q9HBE1-4</id>
    </interactant>
    <interactant intactId="EBI-351590">
        <id>P31943</id>
        <label>HNRNPH1</label>
    </interactant>
    <organismsDiffer>false</organismsDiffer>
    <experiments>6</experiments>
</comment>
<comment type="interaction">
    <interactant intactId="EBI-11022007">
        <id>Q9HBE1-4</id>
    </interactant>
    <interactant intactId="EBI-739395">
        <id>Q16082</id>
        <label>HSPB2</label>
    </interactant>
    <organismsDiffer>false</organismsDiffer>
    <experiments>3</experiments>
</comment>
<comment type="interaction">
    <interactant intactId="EBI-11022007">
        <id>Q9HBE1-4</id>
    </interactant>
    <interactant intactId="EBI-517086">
        <id>O43464</id>
        <label>HTRA2</label>
    </interactant>
    <organismsDiffer>false</organismsDiffer>
    <experiments>3</experiments>
</comment>
<comment type="interaction">
    <interactant intactId="EBI-11022007">
        <id>Q9HBE1-4</id>
    </interactant>
    <interactant intactId="EBI-466029">
        <id>P42858</id>
        <label>HTT</label>
    </interactant>
    <organismsDiffer>false</organismsDiffer>
    <experiments>3</experiments>
</comment>
<comment type="interaction">
    <interactant intactId="EBI-11022007">
        <id>Q9HBE1-4</id>
    </interactant>
    <interactant intactId="EBI-10220600">
        <id>Q8NA54</id>
        <label>IQUB</label>
    </interactant>
    <organismsDiffer>false</organismsDiffer>
    <experiments>3</experiments>
</comment>
<comment type="interaction">
    <interactant intactId="EBI-11022007">
        <id>Q9HBE1-4</id>
    </interactant>
    <interactant intactId="EBI-1055254">
        <id>Q8WXH2</id>
        <label>JPH3</label>
    </interactant>
    <organismsDiffer>false</organismsDiffer>
    <experiments>3</experiments>
</comment>
<comment type="interaction">
    <interactant intactId="EBI-11022007">
        <id>Q9HBE1-4</id>
    </interactant>
    <interactant intactId="EBI-10975473">
        <id>O60333-2</id>
        <label>KIF1B</label>
    </interactant>
    <organismsDiffer>false</organismsDiffer>
    <experiments>3</experiments>
</comment>
<comment type="interaction">
    <interactant intactId="EBI-11022007">
        <id>Q9HBE1-4</id>
    </interactant>
    <interactant intactId="EBI-8284732">
        <id>Q13351</id>
        <label>KLF1</label>
    </interactant>
    <organismsDiffer>false</organismsDiffer>
    <experiments>3</experiments>
</comment>
<comment type="interaction">
    <interactant intactId="EBI-11022007">
        <id>Q9HBE1-4</id>
    </interactant>
    <interactant intactId="EBI-9478422">
        <id>Q96G42</id>
        <label>KLHDC7B</label>
    </interactant>
    <organismsDiffer>false</organismsDiffer>
    <experiments>3</experiments>
</comment>
<comment type="interaction">
    <interactant intactId="EBI-11022007">
        <id>Q9HBE1-4</id>
    </interactant>
    <interactant intactId="EBI-1049638">
        <id>Q14525</id>
        <label>KRT33B</label>
    </interactant>
    <organismsDiffer>false</organismsDiffer>
    <experiments>3</experiments>
</comment>
<comment type="interaction">
    <interactant intactId="EBI-11022007">
        <id>Q9HBE1-4</id>
    </interactant>
    <interactant intactId="EBI-10176379">
        <id>P59991</id>
        <label>KRTAP12-2</label>
    </interactant>
    <organismsDiffer>false</organismsDiffer>
    <experiments>3</experiments>
</comment>
<comment type="interaction">
    <interactant intactId="EBI-11022007">
        <id>Q9HBE1-4</id>
    </interactant>
    <interactant intactId="EBI-11953846">
        <id>Q52LG2</id>
        <label>KRTAP13-2</label>
    </interactant>
    <organismsDiffer>false</organismsDiffer>
    <experiments>3</experiments>
</comment>
<comment type="interaction">
    <interactant intactId="EBI-11022007">
        <id>Q9HBE1-4</id>
    </interactant>
    <interactant intactId="EBI-11992140">
        <id>Q3LI76</id>
        <label>KRTAP15-1</label>
    </interactant>
    <organismsDiffer>false</organismsDiffer>
    <experiments>5</experiments>
</comment>
<comment type="interaction">
    <interactant intactId="EBI-11022007">
        <id>Q9HBE1-4</id>
    </interactant>
    <interactant intactId="EBI-12811111">
        <id>Q8IUB9</id>
        <label>KRTAP19-1</label>
    </interactant>
    <organismsDiffer>false</organismsDiffer>
    <experiments>3</experiments>
</comment>
<comment type="interaction">
    <interactant intactId="EBI-11022007">
        <id>Q9HBE1-4</id>
    </interactant>
    <interactant intactId="EBI-1048945">
        <id>Q3LI72</id>
        <label>KRTAP19-5</label>
    </interactant>
    <organismsDiffer>false</organismsDiffer>
    <experiments>5</experiments>
</comment>
<comment type="interaction">
    <interactant intactId="EBI-11022007">
        <id>Q9HBE1-4</id>
    </interactant>
    <interactant intactId="EBI-12805508">
        <id>Q3LI70</id>
        <label>KRTAP19-6</label>
    </interactant>
    <organismsDiffer>false</organismsDiffer>
    <experiments>3</experiments>
</comment>
<comment type="interaction">
    <interactant intactId="EBI-11022007">
        <id>Q9HBE1-4</id>
    </interactant>
    <interactant intactId="EBI-10241353">
        <id>Q3SYF9</id>
        <label>KRTAP19-7</label>
    </interactant>
    <organismsDiffer>false</organismsDiffer>
    <experiments>3</experiments>
</comment>
<comment type="interaction">
    <interactant intactId="EBI-11022007">
        <id>Q9HBE1-4</id>
    </interactant>
    <interactant intactId="EBI-9996449">
        <id>Q9BYR8</id>
        <label>KRTAP3-1</label>
    </interactant>
    <organismsDiffer>false</organismsDiffer>
    <experiments>3</experiments>
</comment>
<comment type="interaction">
    <interactant intactId="EBI-11022007">
        <id>Q9HBE1-4</id>
    </interactant>
    <interactant intactId="EBI-3957694">
        <id>Q9BYR6</id>
        <label>KRTAP3-3</label>
    </interactant>
    <organismsDiffer>false</organismsDiffer>
    <experiments>3</experiments>
</comment>
<comment type="interaction">
    <interactant intactId="EBI-11022007">
        <id>Q9HBE1-4</id>
    </interactant>
    <interactant intactId="EBI-12111050">
        <id>Q3LI64</id>
        <label>KRTAP6-1</label>
    </interactant>
    <organismsDiffer>false</organismsDiffer>
    <experiments>3</experiments>
</comment>
<comment type="interaction">
    <interactant intactId="EBI-11022007">
        <id>Q9HBE1-4</id>
    </interactant>
    <interactant intactId="EBI-11962084">
        <id>Q3LI66</id>
        <label>KRTAP6-2</label>
    </interactant>
    <organismsDiffer>false</organismsDiffer>
    <experiments>3</experiments>
</comment>
<comment type="interaction">
    <interactant intactId="EBI-11022007">
        <id>Q9HBE1-4</id>
    </interactant>
    <interactant intactId="EBI-22311199">
        <id>Q3LI67</id>
        <label>KRTAP6-3</label>
    </interactant>
    <organismsDiffer>false</organismsDiffer>
    <experiments>3</experiments>
</comment>
<comment type="interaction">
    <interactant intactId="EBI-11022007">
        <id>Q9HBE1-4</id>
    </interactant>
    <interactant intactId="EBI-351935">
        <id>P02545</id>
        <label>LMNA</label>
    </interactant>
    <organismsDiffer>false</organismsDiffer>
    <experiments>3</experiments>
</comment>
<comment type="interaction">
    <interactant intactId="EBI-11022007">
        <id>Q9HBE1-4</id>
    </interactant>
    <interactant intactId="EBI-11959475">
        <id>P25791-3</id>
        <label>LMO2</label>
    </interactant>
    <organismsDiffer>false</organismsDiffer>
    <experiments>3</experiments>
</comment>
<comment type="interaction">
    <interactant intactId="EBI-11022007">
        <id>Q9HBE1-4</id>
    </interactant>
    <interactant intactId="EBI-2341787">
        <id>Q17RB8</id>
        <label>LONRF1</label>
    </interactant>
    <organismsDiffer>false</organismsDiffer>
    <experiments>3</experiments>
</comment>
<comment type="interaction">
    <interactant intactId="EBI-11022007">
        <id>Q9HBE1-4</id>
    </interactant>
    <interactant intactId="EBI-12898559">
        <id>Q8IV03</id>
        <label>LURAP1L</label>
    </interactant>
    <organismsDiffer>false</organismsDiffer>
    <experiments>3</experiments>
</comment>
<comment type="interaction">
    <interactant intactId="EBI-11022007">
        <id>Q9HBE1-4</id>
    </interactant>
    <interactant intactId="EBI-741037">
        <id>Q9BRK4</id>
        <label>LZTS2</label>
    </interactant>
    <organismsDiffer>false</organismsDiffer>
    <experiments>3</experiments>
</comment>
<comment type="interaction">
    <interactant intactId="EBI-11022007">
        <id>Q9HBE1-4</id>
    </interactant>
    <interactant intactId="EBI-724076">
        <id>Q99750</id>
        <label>MDFI</label>
    </interactant>
    <organismsDiffer>false</organismsDiffer>
    <experiments>3</experiments>
</comment>
<comment type="interaction">
    <interactant intactId="EBI-11022007">
        <id>Q9HBE1-4</id>
    </interactant>
    <interactant intactId="EBI-6447480">
        <id>P35548</id>
        <label>MSX2</label>
    </interactant>
    <organismsDiffer>false</organismsDiffer>
    <experiments>3</experiments>
</comment>
<comment type="interaction">
    <interactant intactId="EBI-11022007">
        <id>Q9HBE1-4</id>
    </interactant>
    <interactant intactId="EBI-10271199">
        <id>Q8NI38</id>
        <label>NFKBID</label>
    </interactant>
    <organismsDiffer>false</organismsDiffer>
    <experiments>3</experiments>
</comment>
<comment type="interaction">
    <interactant intactId="EBI-11022007">
        <id>Q9HBE1-4</id>
    </interactant>
    <interactant intactId="EBI-12868744">
        <id>P0CG21</id>
        <label>NHLRC4</label>
    </interactant>
    <organismsDiffer>false</organismsDiffer>
    <experiments>3</experiments>
</comment>
<comment type="interaction">
    <interactant intactId="EBI-11022007">
        <id>Q9HBE1-4</id>
    </interactant>
    <interactant intactId="EBI-536879">
        <id>O43482</id>
        <label>OIP5</label>
    </interactant>
    <organismsDiffer>false</organismsDiffer>
    <experiments>3</experiments>
</comment>
<comment type="interaction">
    <interactant intactId="EBI-11022007">
        <id>Q9HBE1-4</id>
    </interactant>
    <interactant intactId="EBI-357275">
        <id>Q99471</id>
        <label>PFDN5</label>
    </interactant>
    <organismsDiffer>false</organismsDiffer>
    <experiments>3</experiments>
</comment>
<comment type="interaction">
    <interactant intactId="EBI-11022007">
        <id>Q9HBE1-4</id>
    </interactant>
    <interactant intactId="EBI-530034">
        <id>O43189</id>
        <label>PHF1</label>
    </interactant>
    <organismsDiffer>false</organismsDiffer>
    <experiments>3</experiments>
</comment>
<comment type="interaction">
    <interactant intactId="EBI-11022007">
        <id>Q9HBE1-4</id>
    </interactant>
    <interactant intactId="EBI-10293968">
        <id>Q96T49</id>
        <label>PPP1R16B</label>
    </interactant>
    <organismsDiffer>false</organismsDiffer>
    <experiments>3</experiments>
</comment>
<comment type="interaction">
    <interactant intactId="EBI-11022007">
        <id>Q9HBE1-4</id>
    </interactant>
    <interactant intactId="EBI-5235692">
        <id>O75864</id>
        <label>PPP1R37</label>
    </interactant>
    <organismsDiffer>false</organismsDiffer>
    <experiments>3</experiments>
</comment>
<comment type="interaction">
    <interactant intactId="EBI-11022007">
        <id>Q9HBE1-4</id>
    </interactant>
    <interactant intactId="EBI-3957793">
        <id>Q9GZV8</id>
        <label>PRDM14</label>
    </interactant>
    <organismsDiffer>false</organismsDiffer>
    <experiments>3</experiments>
</comment>
<comment type="interaction">
    <interactant intactId="EBI-11022007">
        <id>Q9HBE1-4</id>
    </interactant>
    <interactant intactId="EBI-11320284">
        <id>Q9NQX0</id>
        <label>PRDM6</label>
    </interactant>
    <organismsDiffer>false</organismsDiffer>
    <experiments>3</experiments>
</comment>
<comment type="interaction">
    <interactant intactId="EBI-11022007">
        <id>Q9HBE1-4</id>
    </interactant>
    <interactant intactId="EBI-21251460">
        <id>O60260-5</id>
        <label>PRKN</label>
    </interactant>
    <organismsDiffer>false</organismsDiffer>
    <experiments>3</experiments>
</comment>
<comment type="interaction">
    <interactant intactId="EBI-11022007">
        <id>Q9HBE1-4</id>
    </interactant>
    <interactant intactId="EBI-752074">
        <id>P41219</id>
        <label>PRPH</label>
    </interactant>
    <organismsDiffer>false</organismsDiffer>
    <experiments>3</experiments>
</comment>
<comment type="interaction">
    <interactant intactId="EBI-11022007">
        <id>Q9HBE1-4</id>
    </interactant>
    <interactant intactId="EBI-749195">
        <id>P60891</id>
        <label>PRPS1</label>
    </interactant>
    <organismsDiffer>false</organismsDiffer>
    <experiments>3</experiments>
</comment>
<comment type="interaction">
    <interactant intactId="EBI-11022007">
        <id>Q9HBE1-4</id>
    </interactant>
    <interactant intactId="EBI-12754095">
        <id>P86480</id>
        <label>PRR20D</label>
    </interactant>
    <organismsDiffer>false</organismsDiffer>
    <experiments>3</experiments>
</comment>
<comment type="interaction">
    <interactant intactId="EBI-11022007">
        <id>Q9HBE1-4</id>
    </interactant>
    <interactant intactId="EBI-721525">
        <id>P98175</id>
        <label>RBM10</label>
    </interactant>
    <organismsDiffer>false</organismsDiffer>
    <experiments>3</experiments>
</comment>
<comment type="interaction">
    <interactant intactId="EBI-11022007">
        <id>Q9HBE1-4</id>
    </interactant>
    <interactant intactId="EBI-740343">
        <id>Q93062-3</id>
        <label>RBPMS</label>
    </interactant>
    <organismsDiffer>false</organismsDiffer>
    <experiments>6</experiments>
</comment>
<comment type="interaction">
    <interactant intactId="EBI-11022007">
        <id>Q9HBE1-4</id>
    </interactant>
    <interactant intactId="EBI-11987469">
        <id>Q6ZRY4</id>
        <label>RBPMS2</label>
    </interactant>
    <organismsDiffer>false</organismsDiffer>
    <experiments>3</experiments>
</comment>
<comment type="interaction">
    <interactant intactId="EBI-11022007">
        <id>Q9HBE1-4</id>
    </interactant>
    <interactant intactId="EBI-746118">
        <id>Q8HWS3</id>
        <label>RFX6</label>
    </interactant>
    <organismsDiffer>false</organismsDiffer>
    <experiments>3</experiments>
</comment>
<comment type="interaction">
    <interactant intactId="EBI-11022007">
        <id>Q9HBE1-4</id>
    </interactant>
    <interactant intactId="EBI-10226430">
        <id>Q0D2K3</id>
        <label>RIPPLY1</label>
    </interactant>
    <organismsDiffer>false</organismsDiffer>
    <experiments>3</experiments>
</comment>
<comment type="interaction">
    <interactant intactId="EBI-11022007">
        <id>Q9HBE1-4</id>
    </interactant>
    <interactant intactId="EBI-10269374">
        <id>Q8ND83</id>
        <label>SLAIN1</label>
    </interactant>
    <organismsDiffer>false</organismsDiffer>
    <experiments>3</experiments>
</comment>
<comment type="interaction">
    <interactant intactId="EBI-11022007">
        <id>Q9HBE1-4</id>
    </interactant>
    <interactant intactId="EBI-12275818">
        <id>Q53HV7-2</id>
        <label>SMUG1</label>
    </interactant>
    <organismsDiffer>false</organismsDiffer>
    <experiments>3</experiments>
</comment>
<comment type="interaction">
    <interactant intactId="EBI-11022007">
        <id>Q9HBE1-4</id>
    </interactant>
    <interactant intactId="EBI-8463848">
        <id>Q8NB12</id>
        <label>SMYD1</label>
    </interactant>
    <organismsDiffer>false</organismsDiffer>
    <experiments>3</experiments>
</comment>
<comment type="interaction">
    <interactant intactId="EBI-11022007">
        <id>Q9HBE1-4</id>
    </interactant>
    <interactant intactId="EBI-11959123">
        <id>Q99932-2</id>
        <label>SPAG8</label>
    </interactant>
    <organismsDiffer>false</organismsDiffer>
    <experiments>3</experiments>
</comment>
<comment type="interaction">
    <interactant intactId="EBI-11022007">
        <id>Q9HBE1-4</id>
    </interactant>
    <interactant intactId="EBI-372899">
        <id>Q13148</id>
        <label>TARDBP</label>
    </interactant>
    <organismsDiffer>false</organismsDiffer>
    <experiments>3</experiments>
</comment>
<comment type="interaction">
    <interactant intactId="EBI-11022007">
        <id>Q9HBE1-4</id>
    </interactant>
    <interactant intactId="EBI-11741437">
        <id>Q08117-2</id>
        <label>TLE5</label>
    </interactant>
    <organismsDiffer>false</organismsDiffer>
    <experiments>5</experiments>
</comment>
<comment type="interaction">
    <interactant intactId="EBI-11022007">
        <id>Q9HBE1-4</id>
    </interactant>
    <interactant intactId="EBI-949753">
        <id>Q63HR2</id>
        <label>TNS2</label>
    </interactant>
    <organismsDiffer>false</organismsDiffer>
    <experiments>3</experiments>
</comment>
<comment type="interaction">
    <interactant intactId="EBI-11022007">
        <id>Q9HBE1-4</id>
    </interactant>
    <interactant intactId="EBI-359224">
        <id>Q13077</id>
        <label>TRAF1</label>
    </interactant>
    <organismsDiffer>false</organismsDiffer>
    <experiments>3</experiments>
</comment>
<comment type="interaction">
    <interactant intactId="EBI-11022007">
        <id>Q9HBE1-4</id>
    </interactant>
    <interactant intactId="EBI-355744">
        <id>Q12933</id>
        <label>TRAF2</label>
    </interactant>
    <organismsDiffer>false</organismsDiffer>
    <experiments>3</experiments>
</comment>
<comment type="interaction">
    <interactant intactId="EBI-11022007">
        <id>Q9HBE1-4</id>
    </interactant>
    <interactant intactId="EBI-742327">
        <id>Q15654</id>
        <label>TRIP6</label>
    </interactant>
    <organismsDiffer>false</organismsDiffer>
    <experiments>3</experiments>
</comment>
<comment type="interaction">
    <interactant intactId="EBI-11022007">
        <id>Q9HBE1-4</id>
    </interactant>
    <interactant intactId="EBI-12806590">
        <id>Q86WV8</id>
        <label>TSC1</label>
    </interactant>
    <organismsDiffer>false</organismsDiffer>
    <experiments>3</experiments>
</comment>
<comment type="interaction">
    <interactant intactId="EBI-11022007">
        <id>Q9HBE1-4</id>
    </interactant>
    <interactant intactId="EBI-720609">
        <id>O76024</id>
        <label>WFS1</label>
    </interactant>
    <organismsDiffer>false</organismsDiffer>
    <experiments>3</experiments>
</comment>
<comment type="interaction">
    <interactant intactId="EBI-11022007">
        <id>Q9HBE1-4</id>
    </interactant>
    <interactant intactId="EBI-12040603">
        <id>Q9NZC7-5</id>
        <label>WWOX</label>
    </interactant>
    <organismsDiffer>false</organismsDiffer>
    <experiments>5</experiments>
</comment>
<comment type="interaction">
    <interactant intactId="EBI-11022007">
        <id>Q9HBE1-4</id>
    </interactant>
    <interactant intactId="EBI-743923">
        <id>O00308</id>
        <label>WWP2</label>
    </interactant>
    <organismsDiffer>false</organismsDiffer>
    <experiments>3</experiments>
</comment>
<comment type="interaction">
    <interactant intactId="EBI-11022007">
        <id>Q9HBE1-4</id>
    </interactant>
    <interactant intactId="EBI-10188476">
        <id>A0A0C4DGF1</id>
        <label>ZBTB32</label>
    </interactant>
    <organismsDiffer>false</organismsDiffer>
    <experiments>3</experiments>
</comment>
<comment type="interaction">
    <interactant intactId="EBI-11022007">
        <id>Q9HBE1-4</id>
    </interactant>
    <interactant intactId="EBI-11963196">
        <id>Q15915</id>
        <label>ZIC1</label>
    </interactant>
    <organismsDiffer>false</organismsDiffer>
    <experiments>3</experiments>
</comment>
<comment type="interaction">
    <interactant intactId="EBI-11022007">
        <id>Q9HBE1-4</id>
    </interactant>
    <interactant intactId="EBI-11962760">
        <id>Q9NZV7</id>
        <label>ZIM2</label>
    </interactant>
    <organismsDiffer>false</organismsDiffer>
    <experiments>3</experiments>
</comment>
<comment type="interaction">
    <interactant intactId="EBI-11022007">
        <id>Q9HBE1-4</id>
    </interactant>
    <interactant intactId="EBI-10177989">
        <id>G4XUV3</id>
    </interactant>
    <organismsDiffer>false</organismsDiffer>
    <experiments>3</experiments>
</comment>
<comment type="subcellular location">
    <subcellularLocation>
        <location evidence="5">Nucleus</location>
    </subcellularLocation>
</comment>
<comment type="alternative products">
    <event type="alternative splicing"/>
    <isoform>
        <id>Q9HBE1-1</id>
        <name>1</name>
        <name>C</name>
        <sequence type="displayed"/>
    </isoform>
    <isoform>
        <id>Q9HBE1-2</id>
        <name>2</name>
        <name>B</name>
        <sequence type="described" ref="VSP_008799 VSP_008800"/>
    </isoform>
    <isoform>
        <id>Q9HBE1-3</id>
        <name>3</name>
        <name>A</name>
        <sequence type="described" ref="VSP_008801"/>
    </isoform>
    <isoform>
        <id>Q9HBE1-4</id>
        <name>4</name>
        <name>Short</name>
        <sequence type="described" ref="VSP_008802 VSP_008800"/>
    </isoform>
</comment>
<comment type="tissue specificity">
    <text>Ubiquitous.</text>
</comment>
<comment type="disease">
    <text evidence="6">A chromosomal aberration involving PATZ1 is associated with small round cell sarcoma. Translocation t(1;22)(p36.1;q12) with EWSR1.</text>
</comment>
<comment type="similarity">
    <text evidence="15">Belongs to the krueppel C2H2-type zinc-finger protein family.</text>
</comment>
<comment type="sequence caution" evidence="15">
    <conflict type="erroneous initiation">
        <sequence resource="EMBL-CDS" id="CAB51404"/>
    </conflict>
</comment>
<sequence length="687" mass="74060">MERVNDASCGPSGCYTYQVSRHSTEMLHNLNQQRKNGGRFCDVLLRVGDESFPAHRAVLAACSEYFESVFSAQLGDGGAADGGPADVGGATAAPGGGAGGSRELEMHTISSKVFGDILDFAYTSRIVVRLESFPELMTAAKFLLMRSVIEICQEVIKQSNVQILVPPARADIMLFRPPGTSDLGFPLDMTNGAALAANSNGIAGSMQPEEEAARAAGAAIAGQASLPVLPGVDRLPMVAGPLSPQLLTSPFPSVASSAPPLTGKRGRGRPRKANLLDSMFGSPGGLREAGILPCGLCGKVFTDANRLRQHEAQHGVTSLQLGYIDLPPPRLGENGLPISEDPDGPRKRSRTRKQVACEICGKIFRDVYHLNRHKLSHSGEKPYSCPVCGLRFKRKDRMSYHVRSHDGSVGKPYICQSCGKGFSRPDHLNGHIKQVHTSERPHKCQTCNASFATRDRLRSHLACHEDKVPCQVCGKYLRAAYMADHLKKHSEGPSNFCSICNRGFSSASYLKVHVKTHHGVPLPQVSRHQEPILNGGAAFHCARTYGNKEGQKCSHQDPIESSDSYGDLSDASDLKTPEKQSANGSFSCDMAVPKNKMESDGEKKYPCPECGSFFRSKSYLNKHIQKVHVRALGGPLGDLGPALGSPFSPQQNMSLLESFGFQIVQSAFASSLVDPEVDQQPMGPEGK</sequence>
<feature type="chain" id="PRO_0000047504" description="POZ-, AT hook-, and zinc finger-containing protein 1">
    <location>
        <begin position="1"/>
        <end position="687"/>
    </location>
</feature>
<feature type="domain" description="BTB" evidence="2">
    <location>
        <begin position="41"/>
        <end position="130"/>
    </location>
</feature>
<feature type="DNA-binding region" description="A.T hook">
    <location>
        <begin position="264"/>
        <end position="276"/>
    </location>
</feature>
<feature type="zinc finger region" description="C2H2-type 1" evidence="3">
    <location>
        <begin position="292"/>
        <end position="314"/>
    </location>
</feature>
<feature type="zinc finger region" description="C2H2-type 2" evidence="3">
    <location>
        <begin position="355"/>
        <end position="377"/>
    </location>
</feature>
<feature type="zinc finger region" description="C2H2-type 3" evidence="3">
    <location>
        <begin position="383"/>
        <end position="405"/>
    </location>
</feature>
<feature type="zinc finger region" description="C2H2-type 4" evidence="3">
    <location>
        <begin position="413"/>
        <end position="436"/>
    </location>
</feature>
<feature type="zinc finger region" description="C2H2-type 5" evidence="3">
    <location>
        <begin position="442"/>
        <end position="464"/>
    </location>
</feature>
<feature type="zinc finger region" description="C2H2-type 6" evidence="3">
    <location>
        <begin position="495"/>
        <end position="518"/>
    </location>
</feature>
<feature type="zinc finger region" description="C2H2-type 7" evidence="3">
    <location>
        <begin position="605"/>
        <end position="628"/>
    </location>
</feature>
<feature type="region of interest" description="Disordered" evidence="4">
    <location>
        <begin position="250"/>
        <end position="278"/>
    </location>
</feature>
<feature type="region of interest" description="Disordered" evidence="4">
    <location>
        <begin position="332"/>
        <end position="351"/>
    </location>
</feature>
<feature type="region of interest" description="Disordered" evidence="4">
    <location>
        <begin position="549"/>
        <end position="603"/>
    </location>
</feature>
<feature type="compositionally biased region" description="Low complexity" evidence="4">
    <location>
        <begin position="250"/>
        <end position="260"/>
    </location>
</feature>
<feature type="compositionally biased region" description="Basic and acidic residues" evidence="4">
    <location>
        <begin position="549"/>
        <end position="558"/>
    </location>
</feature>
<feature type="modified residue" description="Phosphoserine" evidence="16 17">
    <location>
        <position position="282"/>
    </location>
</feature>
<feature type="cross-link" description="Glycyl lysine isopeptide (Lys-Gly) (interchain with G-Cter in SUMO2)" evidence="18">
    <location>
        <position position="112"/>
    </location>
</feature>
<feature type="cross-link" description="Glycyl lysine isopeptide (Lys-Gly) (interchain with G-Cter in SUMO2)" evidence="18">
    <location>
        <position position="272"/>
    </location>
</feature>
<feature type="splice variant" id="VSP_008802" description="In isoform 4." evidence="10 11 13">
    <original>TCNASFATRDRLRSHLACHEDKVPCQVCGKYLRAAYMADHLKKHSEGPSNFCSICNRGFSSASYLKVHVKTHHGVPLPQVSRHQEPILNGGA</original>
    <variation>VWVGSSSGLPPLEPLPSDLPSWDFAQPALWRSSHSVPDTAFSLSLKKSFPALENLGPAHSSNTLFCPAPPGYLRQGWTTPEGSRAFTQWPVG</variation>
    <location>
        <begin position="446"/>
        <end position="537"/>
    </location>
</feature>
<feature type="splice variant" id="VSP_008801" description="In isoform 3." evidence="11 12 14">
    <location>
        <begin position="503"/>
        <end position="548"/>
    </location>
</feature>
<feature type="splice variant" id="VSP_008799" description="In isoform 2." evidence="11">
    <original>FSSASYLKVHVKTHHGVPLPQVSRHQEPILNGGA</original>
    <variation>LQAPGAHPEWGSSVPLRQDLWQQRRPEMLTSGSD</variation>
    <location>
        <begin position="504"/>
        <end position="537"/>
    </location>
</feature>
<feature type="splice variant" id="VSP_008800" description="In isoform 2 and isoform 4." evidence="10 11 13">
    <location>
        <begin position="538"/>
        <end position="687"/>
    </location>
</feature>
<feature type="sequence variant" id="VAR_052724" description="In dbSNP:rs2240424.">
    <original>E</original>
    <variation>D</variation>
    <location>
        <position position="685"/>
    </location>
</feature>
<feature type="sequence conflict" description="In Ref. 1; AAF32518." evidence="15" ref="1">
    <original>S</original>
    <variation>N</variation>
    <location>
        <position position="63"/>
    </location>
</feature>
<feature type="sequence conflict" description="In Ref. 1; AAF32518." evidence="15" ref="1">
    <original>P</original>
    <variation>L</variation>
    <location>
        <position position="259"/>
    </location>
</feature>
<feature type="sequence conflict" description="In Ref. 1; AAF32518." evidence="15" ref="1">
    <original>R</original>
    <variation>K</variation>
    <location>
        <position position="394"/>
    </location>
</feature>
<feature type="turn" evidence="19">
    <location>
        <begin position="295"/>
        <end position="297"/>
    </location>
</feature>
<feature type="helix" evidence="19">
    <location>
        <begin position="304"/>
        <end position="314"/>
    </location>
</feature>
<feature type="turn" evidence="19">
    <location>
        <begin position="315"/>
        <end position="317"/>
    </location>
</feature>
<feature type="strand" evidence="21">
    <location>
        <begin position="354"/>
        <end position="357"/>
    </location>
</feature>
<feature type="turn" evidence="21">
    <location>
        <begin position="358"/>
        <end position="361"/>
    </location>
</feature>
<feature type="strand" evidence="21">
    <location>
        <begin position="362"/>
        <end position="366"/>
    </location>
</feature>
<feature type="helix" evidence="21">
    <location>
        <begin position="367"/>
        <end position="373"/>
    </location>
</feature>
<feature type="helix" evidence="21">
    <location>
        <begin position="374"/>
        <end position="376"/>
    </location>
</feature>
<feature type="strand" evidence="20">
    <location>
        <begin position="382"/>
        <end position="385"/>
    </location>
</feature>
<feature type="turn" evidence="20">
    <location>
        <begin position="386"/>
        <end position="389"/>
    </location>
</feature>
<feature type="strand" evidence="23">
    <location>
        <begin position="391"/>
        <end position="393"/>
    </location>
</feature>
<feature type="helix" evidence="20">
    <location>
        <begin position="395"/>
        <end position="405"/>
    </location>
</feature>
<feature type="strand" evidence="23">
    <location>
        <begin position="411"/>
        <end position="413"/>
    </location>
</feature>
<feature type="strand" evidence="22">
    <location>
        <begin position="416"/>
        <end position="418"/>
    </location>
</feature>
<feature type="strand" evidence="22">
    <location>
        <begin position="421"/>
        <end position="424"/>
    </location>
</feature>
<feature type="helix" evidence="22">
    <location>
        <begin position="425"/>
        <end position="434"/>
    </location>
</feature>
<name>PATZ1_HUMAN</name>
<protein>
    <recommendedName>
        <fullName>POZ-, AT hook-, and zinc finger-containing protein 1</fullName>
    </recommendedName>
    <alternativeName>
        <fullName>BTB/POZ domain zinc finger transcription factor</fullName>
    </alternativeName>
    <alternativeName>
        <fullName>Protein kinase A RI subunit alpha-associated protein</fullName>
    </alternativeName>
    <alternativeName>
        <fullName>Zinc finger and BTB domain-containing protein 19</fullName>
    </alternativeName>
    <alternativeName>
        <fullName>Zinc finger protein 278</fullName>
    </alternativeName>
    <alternativeName>
        <fullName>Zinc finger sarcoma gene protein</fullName>
    </alternativeName>
</protein>
<proteinExistence type="evidence at protein level"/>
<evidence type="ECO:0000250" key="1">
    <source>
        <dbReference type="UniProtKB" id="Q5NBY9"/>
    </source>
</evidence>
<evidence type="ECO:0000255" key="2">
    <source>
        <dbReference type="PROSITE-ProRule" id="PRU00037"/>
    </source>
</evidence>
<evidence type="ECO:0000255" key="3">
    <source>
        <dbReference type="PROSITE-ProRule" id="PRU00042"/>
    </source>
</evidence>
<evidence type="ECO:0000256" key="4">
    <source>
        <dbReference type="SAM" id="MobiDB-lite"/>
    </source>
</evidence>
<evidence type="ECO:0000269" key="5">
    <source>
    </source>
</evidence>
<evidence type="ECO:0000269" key="6">
    <source>
    </source>
</evidence>
<evidence type="ECO:0000269" key="7">
    <source>
    </source>
</evidence>
<evidence type="ECO:0000269" key="8">
    <source>
    </source>
</evidence>
<evidence type="ECO:0000269" key="9">
    <source>
    </source>
</evidence>
<evidence type="ECO:0000303" key="10">
    <source>
    </source>
</evidence>
<evidence type="ECO:0000303" key="11">
    <source>
    </source>
</evidence>
<evidence type="ECO:0000303" key="12">
    <source>
    </source>
</evidence>
<evidence type="ECO:0000303" key="13">
    <source>
    </source>
</evidence>
<evidence type="ECO:0000303" key="14">
    <source ref="4"/>
</evidence>
<evidence type="ECO:0000305" key="15"/>
<evidence type="ECO:0007744" key="16">
    <source>
    </source>
</evidence>
<evidence type="ECO:0007744" key="17">
    <source>
    </source>
</evidence>
<evidence type="ECO:0007744" key="18">
    <source>
    </source>
</evidence>
<evidence type="ECO:0007829" key="19">
    <source>
        <dbReference type="PDB" id="2EPP"/>
    </source>
</evidence>
<evidence type="ECO:0007829" key="20">
    <source>
        <dbReference type="PDB" id="2EPQ"/>
    </source>
</evidence>
<evidence type="ECO:0007829" key="21">
    <source>
        <dbReference type="PDB" id="2EPR"/>
    </source>
</evidence>
<evidence type="ECO:0007829" key="22">
    <source>
        <dbReference type="PDB" id="2EPS"/>
    </source>
</evidence>
<evidence type="ECO:0007829" key="23">
    <source>
        <dbReference type="PDB" id="2YT9"/>
    </source>
</evidence>
<keyword id="KW-0002">3D-structure</keyword>
<keyword id="KW-0025">Alternative splicing</keyword>
<keyword id="KW-0160">Chromosomal rearrangement</keyword>
<keyword id="KW-0238">DNA-binding</keyword>
<keyword id="KW-1017">Isopeptide bond</keyword>
<keyword id="KW-0479">Metal-binding</keyword>
<keyword id="KW-0539">Nucleus</keyword>
<keyword id="KW-0597">Phosphoprotein</keyword>
<keyword id="KW-1267">Proteomics identification</keyword>
<keyword id="KW-0656">Proto-oncogene</keyword>
<keyword id="KW-1185">Reference proteome</keyword>
<keyword id="KW-0677">Repeat</keyword>
<keyword id="KW-0678">Repressor</keyword>
<keyword id="KW-0804">Transcription</keyword>
<keyword id="KW-0805">Transcription regulation</keyword>
<keyword id="KW-0832">Ubl conjugation</keyword>
<keyword id="KW-0862">Zinc</keyword>
<keyword id="KW-0863">Zinc-finger</keyword>
<organism>
    <name type="scientific">Homo sapiens</name>
    <name type="common">Human</name>
    <dbReference type="NCBI Taxonomy" id="9606"/>
    <lineage>
        <taxon>Eukaryota</taxon>
        <taxon>Metazoa</taxon>
        <taxon>Chordata</taxon>
        <taxon>Craniata</taxon>
        <taxon>Vertebrata</taxon>
        <taxon>Euteleostomi</taxon>
        <taxon>Mammalia</taxon>
        <taxon>Eutheria</taxon>
        <taxon>Euarchontoglires</taxon>
        <taxon>Primates</taxon>
        <taxon>Haplorrhini</taxon>
        <taxon>Catarrhini</taxon>
        <taxon>Hominidae</taxon>
        <taxon>Homo</taxon>
    </lineage>
</organism>